<organism>
    <name type="scientific">Streptococcus mutans serotype c (strain ATCC 700610 / UA159)</name>
    <dbReference type="NCBI Taxonomy" id="210007"/>
    <lineage>
        <taxon>Bacteria</taxon>
        <taxon>Bacillati</taxon>
        <taxon>Bacillota</taxon>
        <taxon>Bacilli</taxon>
        <taxon>Lactobacillales</taxon>
        <taxon>Streptococcaceae</taxon>
        <taxon>Streptococcus</taxon>
    </lineage>
</organism>
<comment type="catalytic activity">
    <reaction evidence="1">
        <text>tRNA(Gly) + glycine + ATP = glycyl-tRNA(Gly) + AMP + diphosphate</text>
        <dbReference type="Rhea" id="RHEA:16013"/>
        <dbReference type="Rhea" id="RHEA-COMP:9664"/>
        <dbReference type="Rhea" id="RHEA-COMP:9683"/>
        <dbReference type="ChEBI" id="CHEBI:30616"/>
        <dbReference type="ChEBI" id="CHEBI:33019"/>
        <dbReference type="ChEBI" id="CHEBI:57305"/>
        <dbReference type="ChEBI" id="CHEBI:78442"/>
        <dbReference type="ChEBI" id="CHEBI:78522"/>
        <dbReference type="ChEBI" id="CHEBI:456215"/>
        <dbReference type="EC" id="6.1.1.14"/>
    </reaction>
</comment>
<comment type="subunit">
    <text evidence="1">Tetramer of two alpha and two beta subunits.</text>
</comment>
<comment type="subcellular location">
    <subcellularLocation>
        <location evidence="1">Cytoplasm</location>
    </subcellularLocation>
</comment>
<comment type="similarity">
    <text evidence="1">Belongs to the class-II aminoacyl-tRNA synthetase family.</text>
</comment>
<dbReference type="EC" id="6.1.1.14" evidence="1"/>
<dbReference type="EMBL" id="AE014133">
    <property type="protein sequence ID" value="AAN58195.1"/>
    <property type="molecule type" value="Genomic_DNA"/>
</dbReference>
<dbReference type="RefSeq" id="NP_720889.1">
    <property type="nucleotide sequence ID" value="NC_004350.2"/>
</dbReference>
<dbReference type="RefSeq" id="WP_002262081.1">
    <property type="nucleotide sequence ID" value="NC_004350.2"/>
</dbReference>
<dbReference type="SMR" id="Q8CWY6"/>
<dbReference type="STRING" id="210007.SMU_445"/>
<dbReference type="GeneID" id="93859983"/>
<dbReference type="KEGG" id="smu:SMU_445"/>
<dbReference type="PATRIC" id="fig|210007.7.peg.391"/>
<dbReference type="eggNOG" id="COG0752">
    <property type="taxonomic scope" value="Bacteria"/>
</dbReference>
<dbReference type="HOGENOM" id="CLU_057066_1_0_9"/>
<dbReference type="OrthoDB" id="9802183at2"/>
<dbReference type="PhylomeDB" id="Q8CWY6"/>
<dbReference type="Proteomes" id="UP000002512">
    <property type="component" value="Chromosome"/>
</dbReference>
<dbReference type="GO" id="GO:0005829">
    <property type="term" value="C:cytosol"/>
    <property type="evidence" value="ECO:0007669"/>
    <property type="project" value="TreeGrafter"/>
</dbReference>
<dbReference type="GO" id="GO:0005524">
    <property type="term" value="F:ATP binding"/>
    <property type="evidence" value="ECO:0007669"/>
    <property type="project" value="UniProtKB-UniRule"/>
</dbReference>
<dbReference type="GO" id="GO:0140096">
    <property type="term" value="F:catalytic activity, acting on a protein"/>
    <property type="evidence" value="ECO:0007669"/>
    <property type="project" value="UniProtKB-ARBA"/>
</dbReference>
<dbReference type="GO" id="GO:0004820">
    <property type="term" value="F:glycine-tRNA ligase activity"/>
    <property type="evidence" value="ECO:0007669"/>
    <property type="project" value="UniProtKB-UniRule"/>
</dbReference>
<dbReference type="GO" id="GO:0016740">
    <property type="term" value="F:transferase activity"/>
    <property type="evidence" value="ECO:0007669"/>
    <property type="project" value="UniProtKB-ARBA"/>
</dbReference>
<dbReference type="GO" id="GO:0006426">
    <property type="term" value="P:glycyl-tRNA aminoacylation"/>
    <property type="evidence" value="ECO:0007669"/>
    <property type="project" value="UniProtKB-UniRule"/>
</dbReference>
<dbReference type="CDD" id="cd00733">
    <property type="entry name" value="GlyRS_alpha_core"/>
    <property type="match status" value="1"/>
</dbReference>
<dbReference type="FunFam" id="3.30.930.10:FF:000006">
    <property type="entry name" value="Glycine--tRNA ligase alpha subunit"/>
    <property type="match status" value="1"/>
</dbReference>
<dbReference type="Gene3D" id="3.30.930.10">
    <property type="entry name" value="Bira Bifunctional Protein, Domain 2"/>
    <property type="match status" value="1"/>
</dbReference>
<dbReference type="Gene3D" id="1.20.58.180">
    <property type="entry name" value="Class II aaRS and biotin synthetases, domain 2"/>
    <property type="match status" value="1"/>
</dbReference>
<dbReference type="HAMAP" id="MF_00254">
    <property type="entry name" value="Gly_tRNA_synth_alpha"/>
    <property type="match status" value="1"/>
</dbReference>
<dbReference type="InterPro" id="IPR045864">
    <property type="entry name" value="aa-tRNA-synth_II/BPL/LPL"/>
</dbReference>
<dbReference type="InterPro" id="IPR006194">
    <property type="entry name" value="Gly-tRNA-synth_heterodimer"/>
</dbReference>
<dbReference type="InterPro" id="IPR002310">
    <property type="entry name" value="Gly-tRNA_ligase_asu"/>
</dbReference>
<dbReference type="NCBIfam" id="TIGR00388">
    <property type="entry name" value="glyQ"/>
    <property type="match status" value="1"/>
</dbReference>
<dbReference type="NCBIfam" id="NF006827">
    <property type="entry name" value="PRK09348.1"/>
    <property type="match status" value="1"/>
</dbReference>
<dbReference type="PANTHER" id="PTHR30075:SF2">
    <property type="entry name" value="GLYCINE--TRNA LIGASE, CHLOROPLASTIC_MITOCHONDRIAL 2"/>
    <property type="match status" value="1"/>
</dbReference>
<dbReference type="PANTHER" id="PTHR30075">
    <property type="entry name" value="GLYCYL-TRNA SYNTHETASE"/>
    <property type="match status" value="1"/>
</dbReference>
<dbReference type="Pfam" id="PF02091">
    <property type="entry name" value="tRNA-synt_2e"/>
    <property type="match status" value="1"/>
</dbReference>
<dbReference type="PRINTS" id="PR01044">
    <property type="entry name" value="TRNASYNTHGA"/>
</dbReference>
<dbReference type="SUPFAM" id="SSF55681">
    <property type="entry name" value="Class II aaRS and biotin synthetases"/>
    <property type="match status" value="1"/>
</dbReference>
<dbReference type="PROSITE" id="PS50861">
    <property type="entry name" value="AA_TRNA_LIGASE_II_GLYAB"/>
    <property type="match status" value="1"/>
</dbReference>
<name>SYGA_STRMU</name>
<evidence type="ECO:0000255" key="1">
    <source>
        <dbReference type="HAMAP-Rule" id="MF_00254"/>
    </source>
</evidence>
<proteinExistence type="inferred from homology"/>
<gene>
    <name evidence="1" type="primary">glyQ</name>
    <name type="synonym">sygA</name>
    <name type="ordered locus">SMU_445</name>
</gene>
<protein>
    <recommendedName>
        <fullName evidence="1">Glycine--tRNA ligase alpha subunit</fullName>
        <ecNumber evidence="1">6.1.1.14</ecNumber>
    </recommendedName>
    <alternativeName>
        <fullName evidence="1">Glycyl-tRNA synthetase alpha subunit</fullName>
        <shortName evidence="1">GlyRS</shortName>
    </alternativeName>
</protein>
<reference key="1">
    <citation type="journal article" date="2002" name="Proc. Natl. Acad. Sci. U.S.A.">
        <title>Genome sequence of Streptococcus mutans UA159, a cariogenic dental pathogen.</title>
        <authorList>
            <person name="Ajdic D.J."/>
            <person name="McShan W.M."/>
            <person name="McLaughlin R.E."/>
            <person name="Savic G."/>
            <person name="Chang J."/>
            <person name="Carson M.B."/>
            <person name="Primeaux C."/>
            <person name="Tian R."/>
            <person name="Kenton S."/>
            <person name="Jia H.G."/>
            <person name="Lin S.P."/>
            <person name="Qian Y."/>
            <person name="Li S."/>
            <person name="Zhu H."/>
            <person name="Najar F.Z."/>
            <person name="Lai H."/>
            <person name="White J."/>
            <person name="Roe B.A."/>
            <person name="Ferretti J.J."/>
        </authorList>
    </citation>
    <scope>NUCLEOTIDE SEQUENCE [LARGE SCALE GENOMIC DNA]</scope>
    <source>
        <strain>ATCC 700610 / UA159</strain>
    </source>
</reference>
<sequence length="305" mass="35082">MSKKLTFQEIILTLQQYWNDQGCMLMQAYDNEKGAGTMSPYTFLRAIGPEPWNAAYVEPSRRPADGRYGENPNRLYQHHQFQVVMKPSPSNIQELYLQSLELLGINALEHDIRFVEDNWENPSTGSAGLGWEVWLDGMEITQFTYFQQVGGLATQPVTAEVTYGLERLASYIQEVDSVYDIEWAPGVKYGEIFRQPEYEHSKYSFEISNQEMLLENFEKFEAEAKRCLEGSLVHPAYDYILKCSHTFNLLDARGAVSVTERAGYIARIRNLARVAAKTFVAERRRLGYPLLDEMTREKLLAEEEA</sequence>
<accession>Q8CWY6</accession>
<feature type="chain" id="PRO_0000072868" description="Glycine--tRNA ligase alpha subunit">
    <location>
        <begin position="1"/>
        <end position="305"/>
    </location>
</feature>
<keyword id="KW-0030">Aminoacyl-tRNA synthetase</keyword>
<keyword id="KW-0067">ATP-binding</keyword>
<keyword id="KW-0963">Cytoplasm</keyword>
<keyword id="KW-0436">Ligase</keyword>
<keyword id="KW-0547">Nucleotide-binding</keyword>
<keyword id="KW-0648">Protein biosynthesis</keyword>
<keyword id="KW-1185">Reference proteome</keyword>